<feature type="signal peptide" evidence="2">
    <location>
        <begin position="1"/>
        <end position="20"/>
    </location>
</feature>
<feature type="chain" id="PRO_0000008385" description="Ephrin-A5b">
    <location>
        <begin position="21"/>
        <end position="204"/>
    </location>
</feature>
<feature type="propeptide" id="PRO_0000008386" description="Removed in mature form" evidence="2">
    <location>
        <begin position="205"/>
        <end position="228"/>
    </location>
</feature>
<feature type="domain" description="Ephrin RBD" evidence="3">
    <location>
        <begin position="29"/>
        <end position="162"/>
    </location>
</feature>
<feature type="region of interest" description="Disordered" evidence="4">
    <location>
        <begin position="184"/>
        <end position="205"/>
    </location>
</feature>
<feature type="compositionally biased region" description="Basic and acidic residues" evidence="4">
    <location>
        <begin position="184"/>
        <end position="198"/>
    </location>
</feature>
<feature type="lipid moiety-binding region" description="GPI-anchor amidated serine" evidence="2">
    <location>
        <position position="204"/>
    </location>
</feature>
<feature type="glycosylation site" description="N-linked (GlcNAc...) asparagine" evidence="2">
    <location>
        <position position="37"/>
    </location>
</feature>
<feature type="disulfide bond" evidence="3">
    <location>
        <begin position="62"/>
        <end position="102"/>
    </location>
</feature>
<feature type="disulfide bond" evidence="3">
    <location>
        <begin position="90"/>
        <end position="151"/>
    </location>
</feature>
<evidence type="ECO:0000250" key="1"/>
<evidence type="ECO:0000255" key="2"/>
<evidence type="ECO:0000255" key="3">
    <source>
        <dbReference type="PROSITE-ProRule" id="PRU00884"/>
    </source>
</evidence>
<evidence type="ECO:0000256" key="4">
    <source>
        <dbReference type="SAM" id="MobiDB-lite"/>
    </source>
</evidence>
<evidence type="ECO:0000305" key="5"/>
<gene>
    <name type="primary">efna5b</name>
    <name type="synonym">al1</name>
    <name type="synonym">efna5</name>
    <name type="synonym">eplg7</name>
    <name type="synonym">lerk7</name>
</gene>
<protein>
    <recommendedName>
        <fullName>Ephrin-A5b</fullName>
    </recommendedName>
    <alternativeName>
        <fullName>AL-1</fullName>
    </alternativeName>
    <alternativeName>
        <fullName>EPH-related receptor tyrosine kinase ligand 7</fullName>
        <shortName>LERK-7</shortName>
    </alternativeName>
    <alternativeName>
        <fullName>ZfEPHL4</fullName>
    </alternativeName>
</protein>
<name>EFNA5_DANRE</name>
<organism>
    <name type="scientific">Danio rerio</name>
    <name type="common">Zebrafish</name>
    <name type="synonym">Brachydanio rerio</name>
    <dbReference type="NCBI Taxonomy" id="7955"/>
    <lineage>
        <taxon>Eukaryota</taxon>
        <taxon>Metazoa</taxon>
        <taxon>Chordata</taxon>
        <taxon>Craniata</taxon>
        <taxon>Vertebrata</taxon>
        <taxon>Euteleostomi</taxon>
        <taxon>Actinopterygii</taxon>
        <taxon>Neopterygii</taxon>
        <taxon>Teleostei</taxon>
        <taxon>Ostariophysi</taxon>
        <taxon>Cypriniformes</taxon>
        <taxon>Danionidae</taxon>
        <taxon>Danioninae</taxon>
        <taxon>Danio</taxon>
    </lineage>
</organism>
<sequence>MLQAEMIVFVGVILWMCVFSQEPSSKVMADRYAVFWNRTNPRFQRGDYHIDVCINDYLDVYCPHYEDSVPEERTERYVLYMVNYDGYSTCDHTAKGFKRWECNRPHSPNGPLKFSEKFQLFTPFSLGFEFRPGREYYYISSMITETGRRSCLKLKVFVRPPNGCEKTIGVHDRVFVDDKVDNALEPRDDTSHEAEPSRSDVSTSGLRHQTSRPLLALLLLCISLYLLL</sequence>
<proteinExistence type="evidence at protein level"/>
<dbReference type="EMBL" id="Y09669">
    <property type="protein sequence ID" value="CAA70864.1"/>
    <property type="molecule type" value="mRNA"/>
</dbReference>
<dbReference type="RefSeq" id="NP_571101.1">
    <property type="nucleotide sequence ID" value="NM_131026.2"/>
</dbReference>
<dbReference type="SMR" id="P79728"/>
<dbReference type="FunCoup" id="P79728">
    <property type="interactions" value="900"/>
</dbReference>
<dbReference type="IntAct" id="P79728">
    <property type="interactions" value="3"/>
</dbReference>
<dbReference type="STRING" id="7955.ENSDARP00000136933"/>
<dbReference type="GlyCosmos" id="P79728">
    <property type="glycosylation" value="1 site, No reported glycans"/>
</dbReference>
<dbReference type="PaxDb" id="7955-ENSDARP00000092347"/>
<dbReference type="DNASU" id="30223"/>
<dbReference type="GeneID" id="30223"/>
<dbReference type="KEGG" id="dre:30223"/>
<dbReference type="AGR" id="ZFIN:ZDB-GENE-980526-186"/>
<dbReference type="CTD" id="30223"/>
<dbReference type="ZFIN" id="ZDB-GENE-980526-186">
    <property type="gene designation" value="efna5b"/>
</dbReference>
<dbReference type="eggNOG" id="KOG3858">
    <property type="taxonomic scope" value="Eukaryota"/>
</dbReference>
<dbReference type="InParanoid" id="P79728"/>
<dbReference type="OrthoDB" id="6250301at2759"/>
<dbReference type="PhylomeDB" id="P79728"/>
<dbReference type="Reactome" id="R-DRE-2682334">
    <property type="pathway name" value="EPH-Ephrin signaling"/>
</dbReference>
<dbReference type="Reactome" id="R-DRE-3928663">
    <property type="pathway name" value="EPHA-mediated growth cone collapse"/>
</dbReference>
<dbReference type="Reactome" id="R-DRE-3928665">
    <property type="pathway name" value="EPH-ephrin mediated repulsion of cells"/>
</dbReference>
<dbReference type="PRO" id="PR:P79728"/>
<dbReference type="Proteomes" id="UP000000437">
    <property type="component" value="Chromosome 8"/>
</dbReference>
<dbReference type="GO" id="GO:0009897">
    <property type="term" value="C:external side of plasma membrane"/>
    <property type="evidence" value="ECO:0000250"/>
    <property type="project" value="UniProtKB"/>
</dbReference>
<dbReference type="GO" id="GO:0005886">
    <property type="term" value="C:plasma membrane"/>
    <property type="evidence" value="ECO:0000250"/>
    <property type="project" value="UniProtKB"/>
</dbReference>
<dbReference type="GO" id="GO:0046875">
    <property type="term" value="F:ephrin receptor binding"/>
    <property type="evidence" value="ECO:0000318"/>
    <property type="project" value="GO_Central"/>
</dbReference>
<dbReference type="GO" id="GO:0007411">
    <property type="term" value="P:axon guidance"/>
    <property type="evidence" value="ECO:0000318"/>
    <property type="project" value="GO_Central"/>
</dbReference>
<dbReference type="GO" id="GO:0048013">
    <property type="term" value="P:ephrin receptor signaling pathway"/>
    <property type="evidence" value="ECO:0000250"/>
    <property type="project" value="UniProtKB"/>
</dbReference>
<dbReference type="GO" id="GO:0007509">
    <property type="term" value="P:mesoderm migration involved in gastrulation"/>
    <property type="evidence" value="ECO:0000315"/>
    <property type="project" value="ZFIN"/>
</dbReference>
<dbReference type="GO" id="GO:0050731">
    <property type="term" value="P:positive regulation of peptidyl-tyrosine phosphorylation"/>
    <property type="evidence" value="ECO:0000250"/>
    <property type="project" value="UniProtKB"/>
</dbReference>
<dbReference type="GO" id="GO:0032956">
    <property type="term" value="P:regulation of actin cytoskeleton organization"/>
    <property type="evidence" value="ECO:0000250"/>
    <property type="project" value="UniProtKB"/>
</dbReference>
<dbReference type="GO" id="GO:0022407">
    <property type="term" value="P:regulation of cell-cell adhesion"/>
    <property type="evidence" value="ECO:0000250"/>
    <property type="project" value="UniProtKB"/>
</dbReference>
<dbReference type="GO" id="GO:0051893">
    <property type="term" value="P:regulation of focal adhesion assembly"/>
    <property type="evidence" value="ECO:0000250"/>
    <property type="project" value="UniProtKB"/>
</dbReference>
<dbReference type="GO" id="GO:0043087">
    <property type="term" value="P:regulation of GTPase activity"/>
    <property type="evidence" value="ECO:0000250"/>
    <property type="project" value="UniProtKB"/>
</dbReference>
<dbReference type="GO" id="GO:0070507">
    <property type="term" value="P:regulation of microtubule cytoskeleton organization"/>
    <property type="evidence" value="ECO:0000250"/>
    <property type="project" value="UniProtKB"/>
</dbReference>
<dbReference type="GO" id="GO:0001756">
    <property type="term" value="P:somitogenesis"/>
    <property type="evidence" value="ECO:0000315"/>
    <property type="project" value="ZFIN"/>
</dbReference>
<dbReference type="CDD" id="cd10425">
    <property type="entry name" value="Ephrin-A_Ectodomain"/>
    <property type="match status" value="1"/>
</dbReference>
<dbReference type="FunFam" id="2.60.40.420:FF:000005">
    <property type="entry name" value="Ephrin A5"/>
    <property type="match status" value="1"/>
</dbReference>
<dbReference type="Gene3D" id="2.60.40.420">
    <property type="entry name" value="Cupredoxins - blue copper proteins"/>
    <property type="match status" value="1"/>
</dbReference>
<dbReference type="InterPro" id="IPR008972">
    <property type="entry name" value="Cupredoxin"/>
</dbReference>
<dbReference type="InterPro" id="IPR031328">
    <property type="entry name" value="Ephrin"/>
</dbReference>
<dbReference type="InterPro" id="IPR034252">
    <property type="entry name" value="Ephrin-A_Ecto"/>
</dbReference>
<dbReference type="InterPro" id="IPR019765">
    <property type="entry name" value="Ephrin_CS"/>
</dbReference>
<dbReference type="InterPro" id="IPR001799">
    <property type="entry name" value="Ephrin_RBD"/>
</dbReference>
<dbReference type="PANTHER" id="PTHR11304">
    <property type="entry name" value="EPHRIN"/>
    <property type="match status" value="1"/>
</dbReference>
<dbReference type="PANTHER" id="PTHR11304:SF33">
    <property type="entry name" value="EPHRIN-A5"/>
    <property type="match status" value="1"/>
</dbReference>
<dbReference type="Pfam" id="PF00812">
    <property type="entry name" value="Ephrin"/>
    <property type="match status" value="1"/>
</dbReference>
<dbReference type="PRINTS" id="PR01347">
    <property type="entry name" value="EPHRIN"/>
</dbReference>
<dbReference type="SUPFAM" id="SSF49503">
    <property type="entry name" value="Cupredoxins"/>
    <property type="match status" value="1"/>
</dbReference>
<dbReference type="PROSITE" id="PS01299">
    <property type="entry name" value="EPHRIN_RBD_1"/>
    <property type="match status" value="1"/>
</dbReference>
<dbReference type="PROSITE" id="PS51551">
    <property type="entry name" value="EPHRIN_RBD_2"/>
    <property type="match status" value="1"/>
</dbReference>
<reference key="1">
    <citation type="journal article" date="1997" name="Development">
        <title>Two Eph receptor tyrosine kinase ligands control axon growth and may be involved in the creation of the retinotectal map in the zebrafish.</title>
        <authorList>
            <person name="Brennan C."/>
            <person name="Monschau B."/>
            <person name="Lindberg R."/>
            <person name="Guthrie B."/>
            <person name="Drescher U."/>
            <person name="Bonhoeffer F."/>
            <person name="Holder N."/>
        </authorList>
    </citation>
    <scope>NUCLEOTIDE SEQUENCE [MRNA]</scope>
    <source>
        <tissue>Embryo</tissue>
    </source>
</reference>
<accession>P79728</accession>
<keyword id="KW-1003">Cell membrane</keyword>
<keyword id="KW-0217">Developmental protein</keyword>
<keyword id="KW-0221">Differentiation</keyword>
<keyword id="KW-1015">Disulfide bond</keyword>
<keyword id="KW-0325">Glycoprotein</keyword>
<keyword id="KW-0336">GPI-anchor</keyword>
<keyword id="KW-0449">Lipoprotein</keyword>
<keyword id="KW-0472">Membrane</keyword>
<keyword id="KW-0524">Neurogenesis</keyword>
<keyword id="KW-1185">Reference proteome</keyword>
<keyword id="KW-0732">Signal</keyword>
<comment type="function">
    <text evidence="1">Cell surface GPI-bound ligand for Eph receptors, a family of receptor tyrosine kinases which are crucial for migration, repulsion and adhesion during neuronal, vascular and epithelial development. Binds promiscuously Eph receptors residing on adjacent cells, leading to contact-dependent bidirectional signaling into neighboring cells. Induces compartmentalized signaling within a caveolae-like membrane microdomain when bound to the extracellular domain of its cognate receptor. This signaling event requires the activity of the Fyn tyrosine kinase. Activates the epha3 receptor to regulate cell-cell adhesion and cytoskeletal organization. With the receptor epha2 may regulate lens fiber cells shape and interactions and be important for lens transparency maintenance. May function actively to stimulate axon fasciculation (By similarity). Controls axon growth and may be involved in the creation of the retino-tectal map.</text>
</comment>
<comment type="interaction">
    <interactant intactId="EBI-42473236">
        <id>P79728</id>
    </interactant>
    <interactant intactId="EBI-42473062">
        <id>O13146</id>
        <label>epha3</label>
    </interactant>
    <organismsDiffer>false</organismsDiffer>
    <experiments>2</experiments>
</comment>
<comment type="interaction">
    <interactant intactId="EBI-42473236">
        <id>P79728</id>
    </interactant>
    <interactant intactId="EBI-42473157">
        <id>Q5ZEW1</id>
        <label>epha4a</label>
    </interactant>
    <organismsDiffer>false</organismsDiffer>
    <experiments>2</experiments>
</comment>
<comment type="interaction">
    <interactant intactId="EBI-42473236">
        <id>P79728</id>
    </interactant>
    <interactant intactId="EBI-42473126">
        <id>A0A8M9PHF0</id>
        <label>epha7</label>
    </interactant>
    <organismsDiffer>false</organismsDiffer>
    <experiments>2</experiments>
</comment>
<comment type="subcellular location">
    <subcellularLocation>
        <location evidence="5">Cell membrane</location>
        <topology evidence="5">Lipid-anchor</topology>
        <topology evidence="5">GPI-anchor</topology>
    </subcellularLocation>
</comment>
<comment type="tissue specificity">
    <text>Widespread expression in the embryo.</text>
</comment>
<comment type="developmental stage">
    <text>Expressed in the presumptive midbrain of developing embryos from the six-somite stage. By 24 hours, strongly expressed in the midbrain caudal to the presumptive tectum. At later stages, maintained at the posterior margin of the tectum.</text>
</comment>
<comment type="similarity">
    <text evidence="3">Belongs to the ephrin family.</text>
</comment>